<protein>
    <recommendedName>
        <fullName evidence="1">Putative pre-16S rRNA nuclease</fullName>
        <ecNumber evidence="1">3.1.-.-</ecNumber>
    </recommendedName>
</protein>
<evidence type="ECO:0000255" key="1">
    <source>
        <dbReference type="HAMAP-Rule" id="MF_00651"/>
    </source>
</evidence>
<sequence length="149" mass="16553">MRIMGLDVGDKTIGVAVSDLMGWTAQGVATIRRSRLAADLEHLRELVKTYEVERIVCGLPRNMNGTYGPRAEGIRKFGSLVEKKLNIPVDYWDERLTTVAAQKTLIAGDLSRAKRKQVVDKLAAVLILQNYMDAKAHLAAKEQSKETSE</sequence>
<keyword id="KW-0963">Cytoplasm</keyword>
<keyword id="KW-0378">Hydrolase</keyword>
<keyword id="KW-0540">Nuclease</keyword>
<keyword id="KW-1185">Reference proteome</keyword>
<keyword id="KW-0690">Ribosome biogenesis</keyword>
<proteinExistence type="inferred from homology"/>
<dbReference type="EC" id="3.1.-.-" evidence="1"/>
<dbReference type="EMBL" id="CP000930">
    <property type="protein sequence ID" value="ABZ83147.1"/>
    <property type="molecule type" value="Genomic_DNA"/>
</dbReference>
<dbReference type="RefSeq" id="WP_012281411.1">
    <property type="nucleotide sequence ID" value="NC_010337.2"/>
</dbReference>
<dbReference type="SMR" id="B0TFZ0"/>
<dbReference type="STRING" id="498761.HM1_0533"/>
<dbReference type="KEGG" id="hmo:HM1_0533"/>
<dbReference type="eggNOG" id="COG0816">
    <property type="taxonomic scope" value="Bacteria"/>
</dbReference>
<dbReference type="HOGENOM" id="CLU_098240_2_0_9"/>
<dbReference type="OrthoDB" id="9796140at2"/>
<dbReference type="Proteomes" id="UP000008550">
    <property type="component" value="Chromosome"/>
</dbReference>
<dbReference type="GO" id="GO:0005829">
    <property type="term" value="C:cytosol"/>
    <property type="evidence" value="ECO:0007669"/>
    <property type="project" value="TreeGrafter"/>
</dbReference>
<dbReference type="GO" id="GO:0004518">
    <property type="term" value="F:nuclease activity"/>
    <property type="evidence" value="ECO:0007669"/>
    <property type="project" value="UniProtKB-KW"/>
</dbReference>
<dbReference type="GO" id="GO:0000967">
    <property type="term" value="P:rRNA 5'-end processing"/>
    <property type="evidence" value="ECO:0007669"/>
    <property type="project" value="UniProtKB-UniRule"/>
</dbReference>
<dbReference type="CDD" id="cd16964">
    <property type="entry name" value="YqgF"/>
    <property type="match status" value="1"/>
</dbReference>
<dbReference type="Gene3D" id="3.30.420.140">
    <property type="entry name" value="YqgF/RNase H-like domain"/>
    <property type="match status" value="1"/>
</dbReference>
<dbReference type="HAMAP" id="MF_00651">
    <property type="entry name" value="Nuclease_YqgF"/>
    <property type="match status" value="1"/>
</dbReference>
<dbReference type="InterPro" id="IPR012337">
    <property type="entry name" value="RNaseH-like_sf"/>
</dbReference>
<dbReference type="InterPro" id="IPR005227">
    <property type="entry name" value="YqgF"/>
</dbReference>
<dbReference type="InterPro" id="IPR006641">
    <property type="entry name" value="YqgF/RNaseH-like_dom"/>
</dbReference>
<dbReference type="InterPro" id="IPR037027">
    <property type="entry name" value="YqgF/RNaseH-like_dom_sf"/>
</dbReference>
<dbReference type="NCBIfam" id="TIGR00250">
    <property type="entry name" value="RNAse_H_YqgF"/>
    <property type="match status" value="1"/>
</dbReference>
<dbReference type="PANTHER" id="PTHR33317">
    <property type="entry name" value="POLYNUCLEOTIDYL TRANSFERASE, RIBONUCLEASE H-LIKE SUPERFAMILY PROTEIN"/>
    <property type="match status" value="1"/>
</dbReference>
<dbReference type="PANTHER" id="PTHR33317:SF4">
    <property type="entry name" value="POLYNUCLEOTIDYL TRANSFERASE, RIBONUCLEASE H-LIKE SUPERFAMILY PROTEIN"/>
    <property type="match status" value="1"/>
</dbReference>
<dbReference type="Pfam" id="PF03652">
    <property type="entry name" value="RuvX"/>
    <property type="match status" value="1"/>
</dbReference>
<dbReference type="SMART" id="SM00732">
    <property type="entry name" value="YqgFc"/>
    <property type="match status" value="1"/>
</dbReference>
<dbReference type="SUPFAM" id="SSF53098">
    <property type="entry name" value="Ribonuclease H-like"/>
    <property type="match status" value="1"/>
</dbReference>
<organism>
    <name type="scientific">Heliobacterium modesticaldum (strain ATCC 51547 / Ice1)</name>
    <dbReference type="NCBI Taxonomy" id="498761"/>
    <lineage>
        <taxon>Bacteria</taxon>
        <taxon>Bacillati</taxon>
        <taxon>Bacillota</taxon>
        <taxon>Clostridia</taxon>
        <taxon>Eubacteriales</taxon>
        <taxon>Heliobacteriaceae</taxon>
        <taxon>Heliomicrobium</taxon>
    </lineage>
</organism>
<feature type="chain" id="PRO_1000131037" description="Putative pre-16S rRNA nuclease">
    <location>
        <begin position="1"/>
        <end position="149"/>
    </location>
</feature>
<gene>
    <name type="ordered locus">Helmi_02370</name>
    <name type="ORF">HM1_0533</name>
</gene>
<accession>B0TFZ0</accession>
<reference key="1">
    <citation type="journal article" date="2008" name="J. Bacteriol.">
        <title>The genome of Heliobacterium modesticaldum, a phototrophic representative of the Firmicutes containing the simplest photosynthetic apparatus.</title>
        <authorList>
            <person name="Sattley W.M."/>
            <person name="Madigan M.T."/>
            <person name="Swingley W.D."/>
            <person name="Cheung P.C."/>
            <person name="Clocksin K.M."/>
            <person name="Conrad A.L."/>
            <person name="Dejesa L.C."/>
            <person name="Honchak B.M."/>
            <person name="Jung D.O."/>
            <person name="Karbach L.E."/>
            <person name="Kurdoglu A."/>
            <person name="Lahiri S."/>
            <person name="Mastrian S.D."/>
            <person name="Page L.E."/>
            <person name="Taylor H.L."/>
            <person name="Wang Z.T."/>
            <person name="Raymond J."/>
            <person name="Chen M."/>
            <person name="Blankenship R.E."/>
            <person name="Touchman J.W."/>
        </authorList>
    </citation>
    <scope>NUCLEOTIDE SEQUENCE [LARGE SCALE GENOMIC DNA]</scope>
    <source>
        <strain>ATCC 51547 / Ice1</strain>
    </source>
</reference>
<name>YQGF_HELMI</name>
<comment type="function">
    <text evidence="1">Could be a nuclease involved in processing of the 5'-end of pre-16S rRNA.</text>
</comment>
<comment type="subcellular location">
    <subcellularLocation>
        <location evidence="1">Cytoplasm</location>
    </subcellularLocation>
</comment>
<comment type="similarity">
    <text evidence="1">Belongs to the YqgF nuclease family.</text>
</comment>